<dbReference type="EMBL" id="CP001063">
    <property type="protein sequence ID" value="ACD08528.1"/>
    <property type="molecule type" value="Genomic_DNA"/>
</dbReference>
<dbReference type="RefSeq" id="WP_000460714.1">
    <property type="nucleotide sequence ID" value="NC_010658.1"/>
</dbReference>
<dbReference type="KEGG" id="sbc:SbBS512_E2042"/>
<dbReference type="HOGENOM" id="CLU_125889_0_0_6"/>
<dbReference type="Proteomes" id="UP000001030">
    <property type="component" value="Chromosome"/>
</dbReference>
<dbReference type="GO" id="GO:0005886">
    <property type="term" value="C:plasma membrane"/>
    <property type="evidence" value="ECO:0007669"/>
    <property type="project" value="UniProtKB-SubCell"/>
</dbReference>
<dbReference type="HAMAP" id="MF_01874">
    <property type="entry name" value="UPF0756"/>
    <property type="match status" value="1"/>
</dbReference>
<dbReference type="InterPro" id="IPR007382">
    <property type="entry name" value="UPF0756_TM"/>
</dbReference>
<dbReference type="PANTHER" id="PTHR38452">
    <property type="entry name" value="UPF0756 MEMBRANE PROTEIN YEAL"/>
    <property type="match status" value="1"/>
</dbReference>
<dbReference type="PANTHER" id="PTHR38452:SF1">
    <property type="entry name" value="UPF0756 MEMBRANE PROTEIN YEAL"/>
    <property type="match status" value="1"/>
</dbReference>
<dbReference type="Pfam" id="PF04284">
    <property type="entry name" value="DUF441"/>
    <property type="match status" value="1"/>
</dbReference>
<reference key="1">
    <citation type="submission" date="2008-05" db="EMBL/GenBank/DDBJ databases">
        <title>Complete sequence of Shigella boydii serotype 18 strain BS512.</title>
        <authorList>
            <person name="Rasko D.A."/>
            <person name="Rosovitz M."/>
            <person name="Maurelli A.T."/>
            <person name="Myers G."/>
            <person name="Seshadri R."/>
            <person name="Cer R."/>
            <person name="Jiang L."/>
            <person name="Ravel J."/>
            <person name="Sebastian Y."/>
        </authorList>
    </citation>
    <scope>NUCLEOTIDE SEQUENCE [LARGE SCALE GENOMIC DNA]</scope>
    <source>
        <strain>CDC 3083-94 / BS512</strain>
    </source>
</reference>
<feature type="chain" id="PRO_0000388935" description="UPF0756 membrane protein YeaL">
    <location>
        <begin position="1"/>
        <end position="148"/>
    </location>
</feature>
<feature type="transmembrane region" description="Helical" evidence="1">
    <location>
        <begin position="14"/>
        <end position="34"/>
    </location>
</feature>
<feature type="transmembrane region" description="Helical" evidence="1">
    <location>
        <begin position="51"/>
        <end position="71"/>
    </location>
</feature>
<feature type="transmembrane region" description="Helical" evidence="1">
    <location>
        <begin position="86"/>
        <end position="106"/>
    </location>
</feature>
<feature type="transmembrane region" description="Helical" evidence="1">
    <location>
        <begin position="121"/>
        <end position="141"/>
    </location>
</feature>
<name>YEAL_SHIB3</name>
<comment type="subcellular location">
    <subcellularLocation>
        <location evidence="1">Cell membrane</location>
        <topology evidence="1">Multi-pass membrane protein</topology>
    </subcellularLocation>
</comment>
<comment type="similarity">
    <text evidence="1">Belongs to the UPF0756 family.</text>
</comment>
<protein>
    <recommendedName>
        <fullName evidence="1">UPF0756 membrane protein YeaL</fullName>
    </recommendedName>
</protein>
<proteinExistence type="inferred from homology"/>
<keyword id="KW-1003">Cell membrane</keyword>
<keyword id="KW-0472">Membrane</keyword>
<keyword id="KW-1185">Reference proteome</keyword>
<keyword id="KW-0812">Transmembrane</keyword>
<keyword id="KW-1133">Transmembrane helix</keyword>
<sequence>MFDVTLLILLGLAALGFISHNTTVAVSILVLIIVRVTPLSTFFPWIEQQGLSIGIIILTIGVMAPIASGTLPPSTLIHSFLNWKSLVAIAVGVIVSWLGGRGVTLMGSQPQLVAGLLVGTVLGVALFRGVPVGPLIAAGLVSLIVGKQ</sequence>
<accession>B2U422</accession>
<evidence type="ECO:0000255" key="1">
    <source>
        <dbReference type="HAMAP-Rule" id="MF_01874"/>
    </source>
</evidence>
<gene>
    <name evidence="1" type="primary">yeaL</name>
    <name type="ordered locus">SbBS512_E2042</name>
</gene>
<organism>
    <name type="scientific">Shigella boydii serotype 18 (strain CDC 3083-94 / BS512)</name>
    <dbReference type="NCBI Taxonomy" id="344609"/>
    <lineage>
        <taxon>Bacteria</taxon>
        <taxon>Pseudomonadati</taxon>
        <taxon>Pseudomonadota</taxon>
        <taxon>Gammaproteobacteria</taxon>
        <taxon>Enterobacterales</taxon>
        <taxon>Enterobacteriaceae</taxon>
        <taxon>Shigella</taxon>
    </lineage>
</organism>